<feature type="chain" id="PRO_1000082424" description="D-alanine--D-alanyl carrier protein ligase">
    <location>
        <begin position="1"/>
        <end position="485"/>
    </location>
</feature>
<feature type="binding site" evidence="1">
    <location>
        <begin position="144"/>
        <end position="145"/>
    </location>
    <ligand>
        <name>ATP</name>
        <dbReference type="ChEBI" id="CHEBI:30616"/>
    </ligand>
</feature>
<feature type="binding site" evidence="1">
    <location>
        <position position="189"/>
    </location>
    <ligand>
        <name>D-alanine</name>
        <dbReference type="ChEBI" id="CHEBI:57416"/>
    </ligand>
</feature>
<feature type="binding site" evidence="1">
    <location>
        <begin position="284"/>
        <end position="289"/>
    </location>
    <ligand>
        <name>ATP</name>
        <dbReference type="ChEBI" id="CHEBI:30616"/>
    </ligand>
</feature>
<feature type="binding site" evidence="1">
    <location>
        <position position="293"/>
    </location>
    <ligand>
        <name>D-alanine</name>
        <dbReference type="ChEBI" id="CHEBI:57416"/>
    </ligand>
</feature>
<feature type="binding site" evidence="1">
    <location>
        <position position="365"/>
    </location>
    <ligand>
        <name>ATP</name>
        <dbReference type="ChEBI" id="CHEBI:30616"/>
    </ligand>
</feature>
<feature type="binding site" evidence="1">
    <location>
        <position position="473"/>
    </location>
    <ligand>
        <name>ATP</name>
        <dbReference type="ChEBI" id="CHEBI:30616"/>
    </ligand>
</feature>
<feature type="binding site" evidence="1">
    <location>
        <position position="473"/>
    </location>
    <ligand>
        <name>D-alanine</name>
        <dbReference type="ChEBI" id="CHEBI:57416"/>
    </ligand>
</feature>
<dbReference type="EC" id="6.2.1.54" evidence="1"/>
<dbReference type="EMBL" id="CP000703">
    <property type="protein sequence ID" value="ABQ48733.1"/>
    <property type="molecule type" value="Genomic_DNA"/>
</dbReference>
<dbReference type="RefSeq" id="WP_000129659.1">
    <property type="nucleotide sequence ID" value="NC_009487.1"/>
</dbReference>
<dbReference type="SMR" id="A5IRB0"/>
<dbReference type="KEGG" id="saj:SaurJH9_0932"/>
<dbReference type="HOGENOM" id="CLU_000022_2_12_9"/>
<dbReference type="UniPathway" id="UPA00556"/>
<dbReference type="GO" id="GO:0005737">
    <property type="term" value="C:cytoplasm"/>
    <property type="evidence" value="ECO:0007669"/>
    <property type="project" value="UniProtKB-SubCell"/>
</dbReference>
<dbReference type="GO" id="GO:0005524">
    <property type="term" value="F:ATP binding"/>
    <property type="evidence" value="ECO:0007669"/>
    <property type="project" value="UniProtKB-KW"/>
</dbReference>
<dbReference type="GO" id="GO:0047473">
    <property type="term" value="F:D-alanine [D-alanyl carrier protein] ligase activity"/>
    <property type="evidence" value="ECO:0007669"/>
    <property type="project" value="UniProtKB-UniRule"/>
</dbReference>
<dbReference type="GO" id="GO:0070395">
    <property type="term" value="P:lipoteichoic acid biosynthetic process"/>
    <property type="evidence" value="ECO:0007669"/>
    <property type="project" value="UniProtKB-UniRule"/>
</dbReference>
<dbReference type="CDD" id="cd05945">
    <property type="entry name" value="DltA"/>
    <property type="match status" value="1"/>
</dbReference>
<dbReference type="FunFam" id="3.30.300.30:FF:000012">
    <property type="entry name" value="D-alanine--D-alanyl carrier protein ligase"/>
    <property type="match status" value="1"/>
</dbReference>
<dbReference type="Gene3D" id="3.30.300.30">
    <property type="match status" value="1"/>
</dbReference>
<dbReference type="Gene3D" id="3.40.50.12780">
    <property type="entry name" value="N-terminal domain of ligase-like"/>
    <property type="match status" value="1"/>
</dbReference>
<dbReference type="HAMAP" id="MF_00593">
    <property type="entry name" value="DltA"/>
    <property type="match status" value="1"/>
</dbReference>
<dbReference type="InterPro" id="IPR010071">
    <property type="entry name" value="AA_adenyl_dom"/>
</dbReference>
<dbReference type="InterPro" id="IPR025110">
    <property type="entry name" value="AMP-bd_C"/>
</dbReference>
<dbReference type="InterPro" id="IPR045851">
    <property type="entry name" value="AMP-bd_C_sf"/>
</dbReference>
<dbReference type="InterPro" id="IPR000873">
    <property type="entry name" value="AMP-dep_synth/lig_dom"/>
</dbReference>
<dbReference type="InterPro" id="IPR042099">
    <property type="entry name" value="ANL_N_sf"/>
</dbReference>
<dbReference type="InterPro" id="IPR010072">
    <property type="entry name" value="DltA"/>
</dbReference>
<dbReference type="InterPro" id="IPR044507">
    <property type="entry name" value="DltA-like"/>
</dbReference>
<dbReference type="NCBIfam" id="TIGR01733">
    <property type="entry name" value="AA-adenyl-dom"/>
    <property type="match status" value="1"/>
</dbReference>
<dbReference type="NCBIfam" id="TIGR01734">
    <property type="entry name" value="D-ala-DACP-lig"/>
    <property type="match status" value="1"/>
</dbReference>
<dbReference type="NCBIfam" id="NF003417">
    <property type="entry name" value="PRK04813.1"/>
    <property type="match status" value="1"/>
</dbReference>
<dbReference type="PANTHER" id="PTHR45398">
    <property type="match status" value="1"/>
</dbReference>
<dbReference type="PANTHER" id="PTHR45398:SF1">
    <property type="entry name" value="ENZYME, PUTATIVE (JCVI)-RELATED"/>
    <property type="match status" value="1"/>
</dbReference>
<dbReference type="Pfam" id="PF00501">
    <property type="entry name" value="AMP-binding"/>
    <property type="match status" value="1"/>
</dbReference>
<dbReference type="Pfam" id="PF13193">
    <property type="entry name" value="AMP-binding_C"/>
    <property type="match status" value="1"/>
</dbReference>
<dbReference type="SUPFAM" id="SSF56801">
    <property type="entry name" value="Acetyl-CoA synthetase-like"/>
    <property type="match status" value="1"/>
</dbReference>
<gene>
    <name evidence="1" type="primary">dltA</name>
    <name type="ordered locus">SaurJH9_0932</name>
</gene>
<protein>
    <recommendedName>
        <fullName evidence="1">D-alanine--D-alanyl carrier protein ligase</fullName>
        <shortName evidence="1">DCL</shortName>
        <ecNumber evidence="1">6.2.1.54</ecNumber>
    </recommendedName>
    <alternativeName>
        <fullName evidence="1">D-alanine--poly(phosphoribitol) ligase subunit 1</fullName>
    </alternativeName>
    <alternativeName>
        <fullName evidence="1">D-alanine-activating enzyme</fullName>
        <shortName evidence="1">DAE</shortName>
    </alternativeName>
</protein>
<reference key="1">
    <citation type="submission" date="2007-05" db="EMBL/GenBank/DDBJ databases">
        <title>Complete sequence of chromosome of Staphylococcus aureus subsp. aureus JH9.</title>
        <authorList>
            <consortium name="US DOE Joint Genome Institute"/>
            <person name="Copeland A."/>
            <person name="Lucas S."/>
            <person name="Lapidus A."/>
            <person name="Barry K."/>
            <person name="Detter J.C."/>
            <person name="Glavina del Rio T."/>
            <person name="Hammon N."/>
            <person name="Israni S."/>
            <person name="Pitluck S."/>
            <person name="Chain P."/>
            <person name="Malfatti S."/>
            <person name="Shin M."/>
            <person name="Vergez L."/>
            <person name="Schmutz J."/>
            <person name="Larimer F."/>
            <person name="Land M."/>
            <person name="Hauser L."/>
            <person name="Kyrpides N."/>
            <person name="Kim E."/>
            <person name="Tomasz A."/>
            <person name="Richardson P."/>
        </authorList>
    </citation>
    <scope>NUCLEOTIDE SEQUENCE [LARGE SCALE GENOMIC DNA]</scope>
    <source>
        <strain>JH9</strain>
    </source>
</reference>
<accession>A5IRB0</accession>
<keyword id="KW-0067">ATP-binding</keyword>
<keyword id="KW-0963">Cytoplasm</keyword>
<keyword id="KW-0436">Ligase</keyword>
<keyword id="KW-0547">Nucleotide-binding</keyword>
<name>DLTA_STAA9</name>
<organism>
    <name type="scientific">Staphylococcus aureus (strain JH9)</name>
    <dbReference type="NCBI Taxonomy" id="359786"/>
    <lineage>
        <taxon>Bacteria</taxon>
        <taxon>Bacillati</taxon>
        <taxon>Bacillota</taxon>
        <taxon>Bacilli</taxon>
        <taxon>Bacillales</taxon>
        <taxon>Staphylococcaceae</taxon>
        <taxon>Staphylococcus</taxon>
    </lineage>
</organism>
<sequence length="485" mass="54644">MTDIINKLQAFADANPQSIAVRHTTDELTYQQLMDESSKLAHRLQGSKKPMILFGHMSPYMIVGMIGAIKAGCGYVPVDTSIPEDRIKMIINKVQPEFVFNTTDESFESLEGEVFTIEDIKTSQDPVIFDSQIKDNDTVYTIFTSGSTGEPKGVQIEYASLVQFTEWMLELNKSGNKQQWLNQAPFSFDLSVMAIYPCLASGGTLNLVDKNMINKPKLLNEMLTATPINIWVSTPSFMEMCLLLPTLNEEQYGSLNEFFFCGEILPHRAAKALVSRFPSATIYNTYGPTEATVAVTSIQITQEILDQYPTLPVGVERLGARLSTTDDGELVIEGQSVSLGYLKNDQKTAEVFNFDDGIRTYHTGDKAKFENGQWFIQGRIDFQIKLNGYRMELEEIETQLRQSEFVKEAIVVPVYKNDKVIHLIGAIVPTTEVTDNAEMTKNIKNDLKSRLPEYMIPRKFEWMEQLPLTSNGKIDRKKIAEVING</sequence>
<proteinExistence type="inferred from homology"/>
<comment type="function">
    <text evidence="1">Catalyzes the first step in the D-alanylation of lipoteichoic acid (LTA), the activation of D-alanine and its transfer onto the D-alanyl carrier protein (Dcp) DltC. In an ATP-dependent two-step reaction, forms a high energy D-alanyl-AMP intermediate, followed by transfer of the D-alanyl residue as a thiol ester to the phosphopantheinyl prosthetic group of the Dcp. D-alanylation of LTA plays an important role in modulating the properties of the cell wall in Gram-positive bacteria, influencing the net charge of the cell wall.</text>
</comment>
<comment type="catalytic activity">
    <reaction evidence="1">
        <text>holo-[D-alanyl-carrier protein] + D-alanine + ATP = D-alanyl-[D-alanyl-carrier protein] + AMP + diphosphate</text>
        <dbReference type="Rhea" id="RHEA:55132"/>
        <dbReference type="Rhea" id="RHEA-COMP:14102"/>
        <dbReference type="Rhea" id="RHEA-COMP:14103"/>
        <dbReference type="ChEBI" id="CHEBI:30616"/>
        <dbReference type="ChEBI" id="CHEBI:33019"/>
        <dbReference type="ChEBI" id="CHEBI:57416"/>
        <dbReference type="ChEBI" id="CHEBI:64479"/>
        <dbReference type="ChEBI" id="CHEBI:138620"/>
        <dbReference type="ChEBI" id="CHEBI:456215"/>
        <dbReference type="EC" id="6.2.1.54"/>
    </reaction>
</comment>
<comment type="pathway">
    <text evidence="1">Cell wall biogenesis; lipoteichoic acid biosynthesis.</text>
</comment>
<comment type="subcellular location">
    <subcellularLocation>
        <location evidence="1">Cytoplasm</location>
    </subcellularLocation>
</comment>
<comment type="similarity">
    <text evidence="1">Belongs to the ATP-dependent AMP-binding enzyme family. DltA subfamily.</text>
</comment>
<evidence type="ECO:0000255" key="1">
    <source>
        <dbReference type="HAMAP-Rule" id="MF_00593"/>
    </source>
</evidence>